<protein>
    <recommendedName>
        <fullName evidence="1">DNA ligase</fullName>
        <ecNumber evidence="1">6.5.1.2</ecNumber>
    </recommendedName>
    <alternativeName>
        <fullName evidence="1">Polydeoxyribonucleotide synthase [NAD(+)]</fullName>
    </alternativeName>
</protein>
<dbReference type="EC" id="6.5.1.2" evidence="1"/>
<dbReference type="EMBL" id="CP000473">
    <property type="protein sequence ID" value="ABJ88663.1"/>
    <property type="molecule type" value="Genomic_DNA"/>
</dbReference>
<dbReference type="SMR" id="Q01NV7"/>
<dbReference type="FunCoup" id="Q01NV7">
    <property type="interactions" value="485"/>
</dbReference>
<dbReference type="STRING" id="234267.Acid_7765"/>
<dbReference type="KEGG" id="sus:Acid_7765"/>
<dbReference type="eggNOG" id="COG0272">
    <property type="taxonomic scope" value="Bacteria"/>
</dbReference>
<dbReference type="HOGENOM" id="CLU_007764_2_1_0"/>
<dbReference type="InParanoid" id="Q01NV7"/>
<dbReference type="OrthoDB" id="9759736at2"/>
<dbReference type="GO" id="GO:0003677">
    <property type="term" value="F:DNA binding"/>
    <property type="evidence" value="ECO:0007669"/>
    <property type="project" value="InterPro"/>
</dbReference>
<dbReference type="GO" id="GO:0003911">
    <property type="term" value="F:DNA ligase (NAD+) activity"/>
    <property type="evidence" value="ECO:0007669"/>
    <property type="project" value="UniProtKB-UniRule"/>
</dbReference>
<dbReference type="GO" id="GO:0046872">
    <property type="term" value="F:metal ion binding"/>
    <property type="evidence" value="ECO:0007669"/>
    <property type="project" value="UniProtKB-KW"/>
</dbReference>
<dbReference type="GO" id="GO:0006281">
    <property type="term" value="P:DNA repair"/>
    <property type="evidence" value="ECO:0007669"/>
    <property type="project" value="UniProtKB-KW"/>
</dbReference>
<dbReference type="GO" id="GO:0006260">
    <property type="term" value="P:DNA replication"/>
    <property type="evidence" value="ECO:0007669"/>
    <property type="project" value="UniProtKB-KW"/>
</dbReference>
<dbReference type="CDD" id="cd17748">
    <property type="entry name" value="BRCT_DNA_ligase_like"/>
    <property type="match status" value="1"/>
</dbReference>
<dbReference type="CDD" id="cd00114">
    <property type="entry name" value="LIGANc"/>
    <property type="match status" value="1"/>
</dbReference>
<dbReference type="FunFam" id="1.10.150.20:FF:000006">
    <property type="entry name" value="DNA ligase"/>
    <property type="match status" value="1"/>
</dbReference>
<dbReference type="FunFam" id="1.10.150.20:FF:000007">
    <property type="entry name" value="DNA ligase"/>
    <property type="match status" value="1"/>
</dbReference>
<dbReference type="FunFam" id="1.10.287.610:FF:000002">
    <property type="entry name" value="DNA ligase"/>
    <property type="match status" value="1"/>
</dbReference>
<dbReference type="FunFam" id="2.40.50.140:FF:000012">
    <property type="entry name" value="DNA ligase"/>
    <property type="match status" value="1"/>
</dbReference>
<dbReference type="FunFam" id="3.30.470.30:FF:000001">
    <property type="entry name" value="DNA ligase"/>
    <property type="match status" value="1"/>
</dbReference>
<dbReference type="Gene3D" id="6.20.10.30">
    <property type="match status" value="1"/>
</dbReference>
<dbReference type="Gene3D" id="1.10.150.20">
    <property type="entry name" value="5' to 3' exonuclease, C-terminal subdomain"/>
    <property type="match status" value="2"/>
</dbReference>
<dbReference type="Gene3D" id="3.40.50.10190">
    <property type="entry name" value="BRCT domain"/>
    <property type="match status" value="1"/>
</dbReference>
<dbReference type="Gene3D" id="3.30.470.30">
    <property type="entry name" value="DNA ligase/mRNA capping enzyme"/>
    <property type="match status" value="1"/>
</dbReference>
<dbReference type="Gene3D" id="1.10.287.610">
    <property type="entry name" value="Helix hairpin bin"/>
    <property type="match status" value="1"/>
</dbReference>
<dbReference type="Gene3D" id="2.40.50.140">
    <property type="entry name" value="Nucleic acid-binding proteins"/>
    <property type="match status" value="1"/>
</dbReference>
<dbReference type="HAMAP" id="MF_01588">
    <property type="entry name" value="DNA_ligase_A"/>
    <property type="match status" value="1"/>
</dbReference>
<dbReference type="InterPro" id="IPR001357">
    <property type="entry name" value="BRCT_dom"/>
</dbReference>
<dbReference type="InterPro" id="IPR036420">
    <property type="entry name" value="BRCT_dom_sf"/>
</dbReference>
<dbReference type="InterPro" id="IPR041663">
    <property type="entry name" value="DisA/LigA_HHH"/>
</dbReference>
<dbReference type="InterPro" id="IPR001679">
    <property type="entry name" value="DNA_ligase"/>
</dbReference>
<dbReference type="InterPro" id="IPR018239">
    <property type="entry name" value="DNA_ligase_AS"/>
</dbReference>
<dbReference type="InterPro" id="IPR033136">
    <property type="entry name" value="DNA_ligase_CS"/>
</dbReference>
<dbReference type="InterPro" id="IPR013839">
    <property type="entry name" value="DNAligase_adenylation"/>
</dbReference>
<dbReference type="InterPro" id="IPR013840">
    <property type="entry name" value="DNAligase_N"/>
</dbReference>
<dbReference type="InterPro" id="IPR003583">
    <property type="entry name" value="Hlx-hairpin-Hlx_DNA-bd_motif"/>
</dbReference>
<dbReference type="InterPro" id="IPR012340">
    <property type="entry name" value="NA-bd_OB-fold"/>
</dbReference>
<dbReference type="InterPro" id="IPR004150">
    <property type="entry name" value="NAD_DNA_ligase_OB"/>
</dbReference>
<dbReference type="InterPro" id="IPR010994">
    <property type="entry name" value="RuvA_2-like"/>
</dbReference>
<dbReference type="InterPro" id="IPR004149">
    <property type="entry name" value="Znf_DNAligase_C4"/>
</dbReference>
<dbReference type="NCBIfam" id="TIGR00575">
    <property type="entry name" value="dnlj"/>
    <property type="match status" value="1"/>
</dbReference>
<dbReference type="NCBIfam" id="NF005932">
    <property type="entry name" value="PRK07956.1"/>
    <property type="match status" value="1"/>
</dbReference>
<dbReference type="PANTHER" id="PTHR23389">
    <property type="entry name" value="CHROMOSOME TRANSMISSION FIDELITY FACTOR 18"/>
    <property type="match status" value="1"/>
</dbReference>
<dbReference type="PANTHER" id="PTHR23389:SF6">
    <property type="entry name" value="REPLICATION FACTOR C SUBUNIT 1"/>
    <property type="match status" value="1"/>
</dbReference>
<dbReference type="Pfam" id="PF00533">
    <property type="entry name" value="BRCT"/>
    <property type="match status" value="1"/>
</dbReference>
<dbReference type="Pfam" id="PF01653">
    <property type="entry name" value="DNA_ligase_aden"/>
    <property type="match status" value="1"/>
</dbReference>
<dbReference type="Pfam" id="PF03120">
    <property type="entry name" value="DNA_ligase_OB"/>
    <property type="match status" value="1"/>
</dbReference>
<dbReference type="Pfam" id="PF03119">
    <property type="entry name" value="DNA_ligase_ZBD"/>
    <property type="match status" value="1"/>
</dbReference>
<dbReference type="Pfam" id="PF12826">
    <property type="entry name" value="HHH_2"/>
    <property type="match status" value="1"/>
</dbReference>
<dbReference type="Pfam" id="PF14520">
    <property type="entry name" value="HHH_5"/>
    <property type="match status" value="1"/>
</dbReference>
<dbReference type="Pfam" id="PF22745">
    <property type="entry name" value="Nlig-Ia"/>
    <property type="match status" value="1"/>
</dbReference>
<dbReference type="PIRSF" id="PIRSF001604">
    <property type="entry name" value="LigA"/>
    <property type="match status" value="1"/>
</dbReference>
<dbReference type="SMART" id="SM00292">
    <property type="entry name" value="BRCT"/>
    <property type="match status" value="1"/>
</dbReference>
<dbReference type="SMART" id="SM00278">
    <property type="entry name" value="HhH1"/>
    <property type="match status" value="3"/>
</dbReference>
<dbReference type="SMART" id="SM00532">
    <property type="entry name" value="LIGANc"/>
    <property type="match status" value="1"/>
</dbReference>
<dbReference type="SUPFAM" id="SSF52113">
    <property type="entry name" value="BRCT domain"/>
    <property type="match status" value="1"/>
</dbReference>
<dbReference type="SUPFAM" id="SSF56091">
    <property type="entry name" value="DNA ligase/mRNA capping enzyme, catalytic domain"/>
    <property type="match status" value="1"/>
</dbReference>
<dbReference type="SUPFAM" id="SSF50249">
    <property type="entry name" value="Nucleic acid-binding proteins"/>
    <property type="match status" value="1"/>
</dbReference>
<dbReference type="SUPFAM" id="SSF47781">
    <property type="entry name" value="RuvA domain 2-like"/>
    <property type="match status" value="1"/>
</dbReference>
<dbReference type="PROSITE" id="PS50172">
    <property type="entry name" value="BRCT"/>
    <property type="match status" value="1"/>
</dbReference>
<dbReference type="PROSITE" id="PS01055">
    <property type="entry name" value="DNA_LIGASE_N1"/>
    <property type="match status" value="1"/>
</dbReference>
<dbReference type="PROSITE" id="PS01056">
    <property type="entry name" value="DNA_LIGASE_N2"/>
    <property type="match status" value="1"/>
</dbReference>
<evidence type="ECO:0000255" key="1">
    <source>
        <dbReference type="HAMAP-Rule" id="MF_01588"/>
    </source>
</evidence>
<organism>
    <name type="scientific">Solibacter usitatus (strain Ellin6076)</name>
    <dbReference type="NCBI Taxonomy" id="234267"/>
    <lineage>
        <taxon>Bacteria</taxon>
        <taxon>Pseudomonadati</taxon>
        <taxon>Acidobacteriota</taxon>
        <taxon>Terriglobia</taxon>
        <taxon>Bryobacterales</taxon>
        <taxon>Solibacteraceae</taxon>
        <taxon>Candidatus Solibacter</taxon>
    </lineage>
</organism>
<proteinExistence type="inferred from homology"/>
<keyword id="KW-0227">DNA damage</keyword>
<keyword id="KW-0234">DNA repair</keyword>
<keyword id="KW-0235">DNA replication</keyword>
<keyword id="KW-0436">Ligase</keyword>
<keyword id="KW-0460">Magnesium</keyword>
<keyword id="KW-0464">Manganese</keyword>
<keyword id="KW-0479">Metal-binding</keyword>
<keyword id="KW-0520">NAD</keyword>
<keyword id="KW-0862">Zinc</keyword>
<comment type="function">
    <text evidence="1">DNA ligase that catalyzes the formation of phosphodiester linkages between 5'-phosphoryl and 3'-hydroxyl groups in double-stranded DNA using NAD as a coenzyme and as the energy source for the reaction. It is essential for DNA replication and repair of damaged DNA.</text>
</comment>
<comment type="catalytic activity">
    <reaction evidence="1">
        <text>NAD(+) + (deoxyribonucleotide)n-3'-hydroxyl + 5'-phospho-(deoxyribonucleotide)m = (deoxyribonucleotide)n+m + AMP + beta-nicotinamide D-nucleotide.</text>
        <dbReference type="EC" id="6.5.1.2"/>
    </reaction>
</comment>
<comment type="cofactor">
    <cofactor evidence="1">
        <name>Mg(2+)</name>
        <dbReference type="ChEBI" id="CHEBI:18420"/>
    </cofactor>
    <cofactor evidence="1">
        <name>Mn(2+)</name>
        <dbReference type="ChEBI" id="CHEBI:29035"/>
    </cofactor>
</comment>
<comment type="similarity">
    <text evidence="1">Belongs to the NAD-dependent DNA ligase family. LigA subfamily.</text>
</comment>
<gene>
    <name evidence="1" type="primary">ligA</name>
    <name type="ordered locus">Acid_7765</name>
</gene>
<feature type="chain" id="PRO_0000313443" description="DNA ligase">
    <location>
        <begin position="1"/>
        <end position="662"/>
    </location>
</feature>
<feature type="domain" description="BRCT" evidence="1">
    <location>
        <begin position="583"/>
        <end position="662"/>
    </location>
</feature>
<feature type="active site" description="N6-AMP-lysine intermediate" evidence="1">
    <location>
        <position position="114"/>
    </location>
</feature>
<feature type="binding site" evidence="1">
    <location>
        <begin position="32"/>
        <end position="36"/>
    </location>
    <ligand>
        <name>NAD(+)</name>
        <dbReference type="ChEBI" id="CHEBI:57540"/>
    </ligand>
</feature>
<feature type="binding site" evidence="1">
    <location>
        <begin position="81"/>
        <end position="82"/>
    </location>
    <ligand>
        <name>NAD(+)</name>
        <dbReference type="ChEBI" id="CHEBI:57540"/>
    </ligand>
</feature>
<feature type="binding site" evidence="1">
    <location>
        <position position="112"/>
    </location>
    <ligand>
        <name>NAD(+)</name>
        <dbReference type="ChEBI" id="CHEBI:57540"/>
    </ligand>
</feature>
<feature type="binding site" evidence="1">
    <location>
        <position position="135"/>
    </location>
    <ligand>
        <name>NAD(+)</name>
        <dbReference type="ChEBI" id="CHEBI:57540"/>
    </ligand>
</feature>
<feature type="binding site" evidence="1">
    <location>
        <position position="170"/>
    </location>
    <ligand>
        <name>NAD(+)</name>
        <dbReference type="ChEBI" id="CHEBI:57540"/>
    </ligand>
</feature>
<feature type="binding site" evidence="1">
    <location>
        <position position="286"/>
    </location>
    <ligand>
        <name>NAD(+)</name>
        <dbReference type="ChEBI" id="CHEBI:57540"/>
    </ligand>
</feature>
<feature type="binding site" evidence="1">
    <location>
        <position position="310"/>
    </location>
    <ligand>
        <name>NAD(+)</name>
        <dbReference type="ChEBI" id="CHEBI:57540"/>
    </ligand>
</feature>
<feature type="binding site" evidence="1">
    <location>
        <position position="402"/>
    </location>
    <ligand>
        <name>Zn(2+)</name>
        <dbReference type="ChEBI" id="CHEBI:29105"/>
    </ligand>
</feature>
<feature type="binding site" evidence="1">
    <location>
        <position position="405"/>
    </location>
    <ligand>
        <name>Zn(2+)</name>
        <dbReference type="ChEBI" id="CHEBI:29105"/>
    </ligand>
</feature>
<feature type="binding site" evidence="1">
    <location>
        <position position="420"/>
    </location>
    <ligand>
        <name>Zn(2+)</name>
        <dbReference type="ChEBI" id="CHEBI:29105"/>
    </ligand>
</feature>
<feature type="binding site" evidence="1">
    <location>
        <position position="425"/>
    </location>
    <ligand>
        <name>Zn(2+)</name>
        <dbReference type="ChEBI" id="CHEBI:29105"/>
    </ligand>
</feature>
<name>DNLJ_SOLUE</name>
<accession>Q01NV7</accession>
<sequence>MKDPAVEIEKLREQLHHHEHLYYVLDKPEITDAEYDALMHRLQELETKHPDLLTPDSPTQRVGGKPREGFIKVRHSSPMLSLDNALNEAELRDFDRRVRDLLGGAAFRYVTELKMDGLSMAAHYNNGKFTEAVTRGDGTTGEDVTENARTIRSLPLRVKTKLPAFEVRGETVMSRRAFERLNTDRDEKGLSRFANPRNAAAGSLRQLEPQVTASRRLEYYTYFLLTEGRPAYESHWEALTALKQMGFKVNDKSRPCDSIDEVLAFCAHWEGERENLPYEIDGVVVKVDSVEQQRRLGFTAKAPRWAIAYKYPARQATTMIEGIDVQVGRTGALTPVANLKPVVVGGVTVSRATLHNEDEIERLGLQIGDEVVVERSGDVIPKVVRVSSQGSYRKPFKMPSHCPVCNTKIVREEGEAASRCINANCPARLKESILHFASRGVMNIDGMGDALVDQLVDREIVHNIADLYDLKIEDLMDLDRMGVKSAGNVIRNIDKSRRNSLPRVLTALGIRFVGERTAVFLAQAFGSMDAIERATVDELQQAEEVGPKVAEAVVQFFSIPDNRELVDRLRKADLQFTYAYSRPKGGPLTGSTFVLTGTLPNLSREEAKQLIEQAGGKVASAVSKKTSYVVAGEDAGSKLDKAHQLNIRVITEAELHAMLRGE</sequence>
<reference key="1">
    <citation type="journal article" date="2009" name="Appl. Environ. Microbiol.">
        <title>Three genomes from the phylum Acidobacteria provide insight into the lifestyles of these microorganisms in soils.</title>
        <authorList>
            <person name="Ward N.L."/>
            <person name="Challacombe J.F."/>
            <person name="Janssen P.H."/>
            <person name="Henrissat B."/>
            <person name="Coutinho P.M."/>
            <person name="Wu M."/>
            <person name="Xie G."/>
            <person name="Haft D.H."/>
            <person name="Sait M."/>
            <person name="Badger J."/>
            <person name="Barabote R.D."/>
            <person name="Bradley B."/>
            <person name="Brettin T.S."/>
            <person name="Brinkac L.M."/>
            <person name="Bruce D."/>
            <person name="Creasy T."/>
            <person name="Daugherty S.C."/>
            <person name="Davidsen T.M."/>
            <person name="DeBoy R.T."/>
            <person name="Detter J.C."/>
            <person name="Dodson R.J."/>
            <person name="Durkin A.S."/>
            <person name="Ganapathy A."/>
            <person name="Gwinn-Giglio M."/>
            <person name="Han C.S."/>
            <person name="Khouri H."/>
            <person name="Kiss H."/>
            <person name="Kothari S.P."/>
            <person name="Madupu R."/>
            <person name="Nelson K.E."/>
            <person name="Nelson W.C."/>
            <person name="Paulsen I."/>
            <person name="Penn K."/>
            <person name="Ren Q."/>
            <person name="Rosovitz M.J."/>
            <person name="Selengut J.D."/>
            <person name="Shrivastava S."/>
            <person name="Sullivan S.A."/>
            <person name="Tapia R."/>
            <person name="Thompson L.S."/>
            <person name="Watkins K.L."/>
            <person name="Yang Q."/>
            <person name="Yu C."/>
            <person name="Zafar N."/>
            <person name="Zhou L."/>
            <person name="Kuske C.R."/>
        </authorList>
    </citation>
    <scope>NUCLEOTIDE SEQUENCE [LARGE SCALE GENOMIC DNA]</scope>
    <source>
        <strain>Ellin6076</strain>
    </source>
</reference>